<proteinExistence type="evidence at transcript level"/>
<name>IMP3_MOUSE</name>
<reference key="1">
    <citation type="journal article" date="2004" name="Genome Res.">
        <title>The status, quality, and expansion of the NIH full-length cDNA project: the Mammalian Gene Collection (MGC).</title>
        <authorList>
            <consortium name="The MGC Project Team"/>
        </authorList>
    </citation>
    <scope>NUCLEOTIDE SEQUENCE [LARGE SCALE MRNA]</scope>
    <source>
        <strain>FVB/N</strain>
        <tissue>Mammary tumor</tissue>
    </source>
</reference>
<keyword id="KW-0539">Nucleus</keyword>
<keyword id="KW-1185">Reference proteome</keyword>
<keyword id="KW-0687">Ribonucleoprotein</keyword>
<keyword id="KW-0690">Ribosome biogenesis</keyword>
<keyword id="KW-0694">RNA-binding</keyword>
<keyword id="KW-0698">rRNA processing</keyword>
<keyword id="KW-0699">rRNA-binding</keyword>
<protein>
    <recommendedName>
        <fullName>U3 small nucleolar ribonucleoprotein protein IMP3</fullName>
        <shortName>U3 snoRNP protein IMP3</shortName>
    </recommendedName>
</protein>
<evidence type="ECO:0000250" key="1">
    <source>
        <dbReference type="UniProtKB" id="Q9NV31"/>
    </source>
</evidence>
<evidence type="ECO:0000255" key="2">
    <source>
        <dbReference type="PROSITE-ProRule" id="PRU00182"/>
    </source>
</evidence>
<evidence type="ECO:0000305" key="3"/>
<organism>
    <name type="scientific">Mus musculus</name>
    <name type="common">Mouse</name>
    <dbReference type="NCBI Taxonomy" id="10090"/>
    <lineage>
        <taxon>Eukaryota</taxon>
        <taxon>Metazoa</taxon>
        <taxon>Chordata</taxon>
        <taxon>Craniata</taxon>
        <taxon>Vertebrata</taxon>
        <taxon>Euteleostomi</taxon>
        <taxon>Mammalia</taxon>
        <taxon>Eutheria</taxon>
        <taxon>Euarchontoglires</taxon>
        <taxon>Glires</taxon>
        <taxon>Rodentia</taxon>
        <taxon>Myomorpha</taxon>
        <taxon>Muroidea</taxon>
        <taxon>Muridae</taxon>
        <taxon>Murinae</taxon>
        <taxon>Mus</taxon>
        <taxon>Mus</taxon>
    </lineage>
</organism>
<feature type="chain" id="PRO_0000132710" description="U3 small nucleolar ribonucleoprotein protein IMP3">
    <location>
        <begin position="1"/>
        <end position="184"/>
    </location>
</feature>
<feature type="domain" description="S4 RNA-binding" evidence="2">
    <location>
        <begin position="109"/>
        <end position="175"/>
    </location>
</feature>
<dbReference type="EMBL" id="BC009145">
    <property type="protein sequence ID" value="AAH09145.1"/>
    <property type="molecule type" value="mRNA"/>
</dbReference>
<dbReference type="CCDS" id="CCDS23213.1"/>
<dbReference type="RefSeq" id="NP_598737.1">
    <property type="nucleotide sequence ID" value="NM_133976.2"/>
</dbReference>
<dbReference type="SMR" id="Q921Y2"/>
<dbReference type="BioGRID" id="221882">
    <property type="interactions" value="26"/>
</dbReference>
<dbReference type="FunCoup" id="Q921Y2">
    <property type="interactions" value="871"/>
</dbReference>
<dbReference type="STRING" id="10090.ENSMUSP00000034827"/>
<dbReference type="PhosphoSitePlus" id="Q921Y2"/>
<dbReference type="SwissPalm" id="Q921Y2"/>
<dbReference type="PaxDb" id="10090-ENSMUSP00000034827"/>
<dbReference type="PeptideAtlas" id="Q921Y2"/>
<dbReference type="ProteomicsDB" id="269311"/>
<dbReference type="Pumba" id="Q921Y2"/>
<dbReference type="Antibodypedia" id="43256">
    <property type="antibodies" value="239 antibodies from 29 providers"/>
</dbReference>
<dbReference type="DNASU" id="102462"/>
<dbReference type="Ensembl" id="ENSMUST00000034827.10">
    <property type="protein sequence ID" value="ENSMUSP00000034827.9"/>
    <property type="gene ID" value="ENSMUSG00000032288.10"/>
</dbReference>
<dbReference type="GeneID" id="102462"/>
<dbReference type="KEGG" id="mmu:102462"/>
<dbReference type="UCSC" id="uc009ptq.1">
    <property type="organism name" value="mouse"/>
</dbReference>
<dbReference type="AGR" id="MGI:1916119"/>
<dbReference type="CTD" id="55272"/>
<dbReference type="MGI" id="MGI:1916119">
    <property type="gene designation" value="Imp3"/>
</dbReference>
<dbReference type="VEuPathDB" id="HostDB:ENSMUSG00000032288"/>
<dbReference type="eggNOG" id="KOG4655">
    <property type="taxonomic scope" value="Eukaryota"/>
</dbReference>
<dbReference type="GeneTree" id="ENSGT00550000075090"/>
<dbReference type="HOGENOM" id="CLU_097281_0_0_1"/>
<dbReference type="InParanoid" id="Q921Y2"/>
<dbReference type="OMA" id="FRIKHEQ"/>
<dbReference type="OrthoDB" id="10248812at2759"/>
<dbReference type="PhylomeDB" id="Q921Y2"/>
<dbReference type="TreeFam" id="TF300149"/>
<dbReference type="Reactome" id="R-MMU-6791226">
    <property type="pathway name" value="Major pathway of rRNA processing in the nucleolus and cytosol"/>
</dbReference>
<dbReference type="BioGRID-ORCS" id="102462">
    <property type="hits" value="25 hits in 73 CRISPR screens"/>
</dbReference>
<dbReference type="PRO" id="PR:Q921Y2"/>
<dbReference type="Proteomes" id="UP000000589">
    <property type="component" value="Chromosome 9"/>
</dbReference>
<dbReference type="RNAct" id="Q921Y2">
    <property type="molecule type" value="protein"/>
</dbReference>
<dbReference type="Bgee" id="ENSMUSG00000032288">
    <property type="expression patterns" value="Expressed in mesodermal cell in embryo and 261 other cell types or tissues"/>
</dbReference>
<dbReference type="GO" id="GO:0005829">
    <property type="term" value="C:cytosol"/>
    <property type="evidence" value="ECO:0007669"/>
    <property type="project" value="Ensembl"/>
</dbReference>
<dbReference type="GO" id="GO:0034457">
    <property type="term" value="C:Mpp10 complex"/>
    <property type="evidence" value="ECO:0000266"/>
    <property type="project" value="MGI"/>
</dbReference>
<dbReference type="GO" id="GO:0005730">
    <property type="term" value="C:nucleolus"/>
    <property type="evidence" value="ECO:0000266"/>
    <property type="project" value="MGI"/>
</dbReference>
<dbReference type="GO" id="GO:0005654">
    <property type="term" value="C:nucleoplasm"/>
    <property type="evidence" value="ECO:0007669"/>
    <property type="project" value="Ensembl"/>
</dbReference>
<dbReference type="GO" id="GO:0030684">
    <property type="term" value="C:preribosome"/>
    <property type="evidence" value="ECO:0000266"/>
    <property type="project" value="MGI"/>
</dbReference>
<dbReference type="GO" id="GO:0032040">
    <property type="term" value="C:small-subunit processome"/>
    <property type="evidence" value="ECO:0000250"/>
    <property type="project" value="UniProtKB"/>
</dbReference>
<dbReference type="GO" id="GO:0019843">
    <property type="term" value="F:rRNA binding"/>
    <property type="evidence" value="ECO:0007669"/>
    <property type="project" value="UniProtKB-KW"/>
</dbReference>
<dbReference type="GO" id="GO:0042274">
    <property type="term" value="P:ribosomal small subunit biogenesis"/>
    <property type="evidence" value="ECO:0000250"/>
    <property type="project" value="UniProtKB"/>
</dbReference>
<dbReference type="GO" id="GO:0006364">
    <property type="term" value="P:rRNA processing"/>
    <property type="evidence" value="ECO:0000316"/>
    <property type="project" value="MGI"/>
</dbReference>
<dbReference type="CDD" id="cd00165">
    <property type="entry name" value="S4"/>
    <property type="match status" value="1"/>
</dbReference>
<dbReference type="FunFam" id="3.10.290.10:FF:000006">
    <property type="entry name" value="U3 small nucleolar ribonucleoprotein IMP3"/>
    <property type="match status" value="1"/>
</dbReference>
<dbReference type="Gene3D" id="3.10.290.10">
    <property type="entry name" value="RNA-binding S4 domain"/>
    <property type="match status" value="1"/>
</dbReference>
<dbReference type="InterPro" id="IPR022801">
    <property type="entry name" value="Ribosomal_uS4"/>
</dbReference>
<dbReference type="InterPro" id="IPR001912">
    <property type="entry name" value="Ribosomal_uS4_N"/>
</dbReference>
<dbReference type="InterPro" id="IPR002942">
    <property type="entry name" value="S4_RNA-bd"/>
</dbReference>
<dbReference type="InterPro" id="IPR036986">
    <property type="entry name" value="S4_RNA-bd_sf"/>
</dbReference>
<dbReference type="PANTHER" id="PTHR11831">
    <property type="entry name" value="30S 40S RIBOSOMAL PROTEIN"/>
    <property type="match status" value="1"/>
</dbReference>
<dbReference type="PANTHER" id="PTHR11831:SF1">
    <property type="entry name" value="U3 SMALL NUCLEOLAR RIBONUCLEOPROTEIN PROTEIN IMP3"/>
    <property type="match status" value="1"/>
</dbReference>
<dbReference type="Pfam" id="PF00163">
    <property type="entry name" value="Ribosomal_S4"/>
    <property type="match status" value="1"/>
</dbReference>
<dbReference type="Pfam" id="PF01479">
    <property type="entry name" value="S4"/>
    <property type="match status" value="1"/>
</dbReference>
<dbReference type="SMART" id="SM01390">
    <property type="entry name" value="Ribosomal_S4"/>
    <property type="match status" value="1"/>
</dbReference>
<dbReference type="SMART" id="SM00363">
    <property type="entry name" value="S4"/>
    <property type="match status" value="1"/>
</dbReference>
<dbReference type="SUPFAM" id="SSF55174">
    <property type="entry name" value="Alpha-L RNA-binding motif"/>
    <property type="match status" value="1"/>
</dbReference>
<dbReference type="PROSITE" id="PS50889">
    <property type="entry name" value="S4"/>
    <property type="match status" value="1"/>
</dbReference>
<comment type="function">
    <text evidence="1">Component of the 60-80S U3 small nucleolar ribonucleoprotein (U3 snoRNP). Required for the early cleavages during pre-18S ribosomal RNA processing. Part of the small subunit (SSU) processome, first precursor of the small eukaryotic ribosomal subunit. During the assembly of the SSU processome in the nucleolus, many ribosome biogenesis factors, an RNA chaperone and ribosomal proteins associate with the nascent pre-rRNA and work in concert to generate RNA folding, modifications, rearrangements and cleavage as well as targeted degradation of pre-ribosomal RNA by the RNA exosome.</text>
</comment>
<comment type="subunit">
    <text evidence="1">Part of the small subunit (SSU) processome, composed of more than 70 proteins and the RNA chaperone small nucleolar RNA (snoRNA) U3. Component of a heterotrimeric complex containing IMP3, IMP4 and MPHOSPH10. Interacts with MPHOSPH10.</text>
</comment>
<comment type="subcellular location">
    <subcellularLocation>
        <location evidence="1">Nucleus</location>
        <location evidence="1">Nucleolus</location>
    </subcellularLocation>
</comment>
<comment type="similarity">
    <text evidence="3">Belongs to the universal ribosomal protein uS4 family.</text>
</comment>
<gene>
    <name type="primary">Imp3</name>
</gene>
<sequence>MVRKLKFHEQKLLKQVDFLNWEVTDHNLHELRVLRRYRLQRREEYTRYNQLSRAVRELARRLRDLPERDPFRVRASAALLDKLYAMGLVPTRGSLELCDSVSASSFCRRRLPTLLLKLRMAQHLQAAVAFVEQGHVRVGPDVVTDPAFLVTRSMEDFVTWVDSSKIKRHVLEYNEERDDFDLDA</sequence>
<accession>Q921Y2</accession>